<name>ARGJ_DEBHA</name>
<organism>
    <name type="scientific">Debaryomyces hansenii (strain ATCC 36239 / CBS 767 / BCRC 21394 / JCM 1990 / NBRC 0083 / IGC 2968)</name>
    <name type="common">Yeast</name>
    <name type="synonym">Torulaspora hansenii</name>
    <dbReference type="NCBI Taxonomy" id="284592"/>
    <lineage>
        <taxon>Eukaryota</taxon>
        <taxon>Fungi</taxon>
        <taxon>Dikarya</taxon>
        <taxon>Ascomycota</taxon>
        <taxon>Saccharomycotina</taxon>
        <taxon>Pichiomycetes</taxon>
        <taxon>Debaryomycetaceae</taxon>
        <taxon>Debaryomyces</taxon>
    </lineage>
</organism>
<accession>Q6BKT4</accession>
<evidence type="ECO:0000255" key="1">
    <source>
        <dbReference type="HAMAP-Rule" id="MF_03124"/>
    </source>
</evidence>
<evidence type="ECO:0000305" key="2"/>
<feature type="chain" id="PRO_0000398050" description="Arginine biosynthesis bifunctional protein ArgJ alpha chain" evidence="1">
    <location>
        <begin position="1"/>
        <end position="213"/>
    </location>
</feature>
<feature type="chain" id="PRO_0000398051" description="Arginine biosynthesis bifunctional protein ArgJ beta chain" evidence="1">
    <location>
        <begin position="214"/>
        <end position="441"/>
    </location>
</feature>
<feature type="active site" description="Nucleophile" evidence="1">
    <location>
        <position position="214"/>
    </location>
</feature>
<feature type="binding site" evidence="1">
    <location>
        <position position="177"/>
    </location>
    <ligand>
        <name>substrate</name>
    </ligand>
</feature>
<feature type="binding site" evidence="1">
    <location>
        <position position="203"/>
    </location>
    <ligand>
        <name>substrate</name>
    </ligand>
</feature>
<feature type="binding site" evidence="1">
    <location>
        <position position="214"/>
    </location>
    <ligand>
        <name>substrate</name>
    </ligand>
</feature>
<feature type="binding site" evidence="1">
    <location>
        <position position="303"/>
    </location>
    <ligand>
        <name>substrate</name>
    </ligand>
</feature>
<feature type="binding site" evidence="1">
    <location>
        <position position="436"/>
    </location>
    <ligand>
        <name>substrate</name>
    </ligand>
</feature>
<feature type="binding site" evidence="1">
    <location>
        <position position="441"/>
    </location>
    <ligand>
        <name>substrate</name>
    </ligand>
</feature>
<feature type="site" description="Involved in the stabilization of negative charge on the oxyanion by the formation of the oxyanion hole" evidence="1">
    <location>
        <position position="137"/>
    </location>
</feature>
<feature type="site" description="Involved in the stabilization of negative charge on the oxyanion by the formation of the oxyanion hole" evidence="1">
    <location>
        <position position="138"/>
    </location>
</feature>
<feature type="site" description="Cleavage; by autolysis" evidence="1">
    <location>
        <begin position="213"/>
        <end position="214"/>
    </location>
</feature>
<proteinExistence type="inferred from homology"/>
<comment type="function">
    <text evidence="1">Catalyzes two activities which are involved in the cyclic version of arginine biosynthesis: the synthesis of acetylglutamate from glutamate and acetyl-CoA, and of ornithine by transacetylation between acetylornithine and glutamate.</text>
</comment>
<comment type="catalytic activity">
    <reaction evidence="1">
        <text>N(2)-acetyl-L-ornithine + L-glutamate = N-acetyl-L-glutamate + L-ornithine</text>
        <dbReference type="Rhea" id="RHEA:15349"/>
        <dbReference type="ChEBI" id="CHEBI:29985"/>
        <dbReference type="ChEBI" id="CHEBI:44337"/>
        <dbReference type="ChEBI" id="CHEBI:46911"/>
        <dbReference type="ChEBI" id="CHEBI:57805"/>
        <dbReference type="EC" id="2.3.1.35"/>
    </reaction>
</comment>
<comment type="catalytic activity">
    <reaction evidence="1">
        <text>L-glutamate + acetyl-CoA = N-acetyl-L-glutamate + CoA + H(+)</text>
        <dbReference type="Rhea" id="RHEA:24292"/>
        <dbReference type="ChEBI" id="CHEBI:15378"/>
        <dbReference type="ChEBI" id="CHEBI:29985"/>
        <dbReference type="ChEBI" id="CHEBI:44337"/>
        <dbReference type="ChEBI" id="CHEBI:57287"/>
        <dbReference type="ChEBI" id="CHEBI:57288"/>
        <dbReference type="EC" id="2.3.1.1"/>
    </reaction>
</comment>
<comment type="pathway">
    <text evidence="1">Amino-acid biosynthesis; L-arginine biosynthesis; L-ornithine and N-acetyl-L-glutamate from L-glutamate and N(2)-acetyl-L-ornithine (cyclic): step 1/1.</text>
</comment>
<comment type="pathway">
    <text evidence="1">Amino-acid biosynthesis; L-arginine biosynthesis; N(2)-acetyl-L-ornithine from L-glutamate: step 1/4.</text>
</comment>
<comment type="subunit">
    <text evidence="1">Heterodimer of an alpha and a beta chain.</text>
</comment>
<comment type="subcellular location">
    <subcellularLocation>
        <location evidence="1">Mitochondrion matrix</location>
    </subcellularLocation>
</comment>
<comment type="PTM">
    <text evidence="1">The alpha and beta chains are autoproteolytically processed from a single precursor protein within the mitochondrion.</text>
</comment>
<comment type="miscellaneous">
    <text evidence="1">This protein may be expected to contain an N-terminal transit peptide but none has been predicted.</text>
</comment>
<comment type="similarity">
    <text evidence="1">Belongs to the ArgJ family.</text>
</comment>
<comment type="sequence caution" evidence="2">
    <conflict type="erroneous initiation">
        <sequence resource="EMBL-CDS" id="CAG89575"/>
    </conflict>
    <text>Truncated N-terminus.</text>
</comment>
<protein>
    <recommendedName>
        <fullName evidence="1">Arginine biosynthesis bifunctional protein ArgJ, mitochondrial</fullName>
    </recommendedName>
    <domain>
        <recommendedName>
            <fullName evidence="1">Glutamate N-acetyltransferase</fullName>
            <shortName evidence="1">GAT</shortName>
            <ecNumber evidence="1">2.3.1.35</ecNumber>
        </recommendedName>
        <alternativeName>
            <fullName evidence="1">Ornithine acetyltransferase</fullName>
            <shortName evidence="1">OATase</shortName>
        </alternativeName>
        <alternativeName>
            <fullName evidence="1">Ornithine transacetylase</fullName>
        </alternativeName>
    </domain>
    <domain>
        <recommendedName>
            <fullName evidence="1">Amino-acid acetyltransferase</fullName>
            <ecNumber evidence="1">2.3.1.1</ecNumber>
        </recommendedName>
        <alternativeName>
            <fullName evidence="1">N-acetylglutamate synthase</fullName>
            <shortName evidence="1">AGS</shortName>
        </alternativeName>
    </domain>
    <component>
        <recommendedName>
            <fullName evidence="1">Arginine biosynthesis bifunctional protein ArgJ alpha chain</fullName>
        </recommendedName>
    </component>
    <component>
        <recommendedName>
            <fullName evidence="1">Arginine biosynthesis bifunctional protein ArgJ beta chain</fullName>
        </recommendedName>
    </component>
</protein>
<reference key="1">
    <citation type="journal article" date="2004" name="Nature">
        <title>Genome evolution in yeasts.</title>
        <authorList>
            <person name="Dujon B."/>
            <person name="Sherman D."/>
            <person name="Fischer G."/>
            <person name="Durrens P."/>
            <person name="Casaregola S."/>
            <person name="Lafontaine I."/>
            <person name="de Montigny J."/>
            <person name="Marck C."/>
            <person name="Neuveglise C."/>
            <person name="Talla E."/>
            <person name="Goffard N."/>
            <person name="Frangeul L."/>
            <person name="Aigle M."/>
            <person name="Anthouard V."/>
            <person name="Babour A."/>
            <person name="Barbe V."/>
            <person name="Barnay S."/>
            <person name="Blanchin S."/>
            <person name="Beckerich J.-M."/>
            <person name="Beyne E."/>
            <person name="Bleykasten C."/>
            <person name="Boisrame A."/>
            <person name="Boyer J."/>
            <person name="Cattolico L."/>
            <person name="Confanioleri F."/>
            <person name="de Daruvar A."/>
            <person name="Despons L."/>
            <person name="Fabre E."/>
            <person name="Fairhead C."/>
            <person name="Ferry-Dumazet H."/>
            <person name="Groppi A."/>
            <person name="Hantraye F."/>
            <person name="Hennequin C."/>
            <person name="Jauniaux N."/>
            <person name="Joyet P."/>
            <person name="Kachouri R."/>
            <person name="Kerrest A."/>
            <person name="Koszul R."/>
            <person name="Lemaire M."/>
            <person name="Lesur I."/>
            <person name="Ma L."/>
            <person name="Muller H."/>
            <person name="Nicaud J.-M."/>
            <person name="Nikolski M."/>
            <person name="Oztas S."/>
            <person name="Ozier-Kalogeropoulos O."/>
            <person name="Pellenz S."/>
            <person name="Potier S."/>
            <person name="Richard G.-F."/>
            <person name="Straub M.-L."/>
            <person name="Suleau A."/>
            <person name="Swennen D."/>
            <person name="Tekaia F."/>
            <person name="Wesolowski-Louvel M."/>
            <person name="Westhof E."/>
            <person name="Wirth B."/>
            <person name="Zeniou-Meyer M."/>
            <person name="Zivanovic Y."/>
            <person name="Bolotin-Fukuhara M."/>
            <person name="Thierry A."/>
            <person name="Bouchier C."/>
            <person name="Caudron B."/>
            <person name="Scarpelli C."/>
            <person name="Gaillardin C."/>
            <person name="Weissenbach J."/>
            <person name="Wincker P."/>
            <person name="Souciet J.-L."/>
        </authorList>
    </citation>
    <scope>NUCLEOTIDE SEQUENCE [LARGE SCALE GENOMIC DNA]</scope>
    <source>
        <strain>ATCC 36239 / CBS 767 / BCRC 21394 / JCM 1990 / NBRC 0083 / IGC 2968</strain>
    </source>
</reference>
<sequence length="441" mass="46228">MQLNGIGKHSIRFLSDKASRFVPKGGVYPKGFMVGGIHCGVKKDGKSLDLAILTNTHGKSAVASAVFTTNKFKAAPVQVSSKIVKEKKGEEINSLVVNSGNANAVTGSQGMKDAQDMITVTDSALGNPTNSSLVMSTGVIGNNLPISKILSGIPQLAGGNLGNTHEDWLNCAQAICTTDTFPKLVSKSFELNGHTYTLAGLAKGAGMICPNMATLLGFFVTDAPVSASALDQILKFATDRSFNSISVDGDMSTNDTIVAIANGAAGGELIDNTASSAESFGILQREITGFAQQLAQLVVRDGEGATKFITISVKNALSYGDAKIIASSIANSSLFKTAMYGNDANWGRILCAIGYSQVSSGDSINPAKTNVSFIPSDGSSKLKLLVNGEPEVVDEKRASEILSVEDIEVEIDLGTGGGQECKFWTCDLTHEYITINGDYRS</sequence>
<dbReference type="EC" id="2.3.1.35" evidence="1"/>
<dbReference type="EC" id="2.3.1.1" evidence="1"/>
<dbReference type="EMBL" id="CR382138">
    <property type="protein sequence ID" value="CAG89575.2"/>
    <property type="status" value="ALT_INIT"/>
    <property type="molecule type" value="Genomic_DNA"/>
</dbReference>
<dbReference type="RefSeq" id="XP_461187.2">
    <property type="nucleotide sequence ID" value="XM_461187.1"/>
</dbReference>
<dbReference type="SMR" id="Q6BKT4"/>
<dbReference type="FunCoup" id="Q6BKT4">
    <property type="interactions" value="309"/>
</dbReference>
<dbReference type="STRING" id="284592.Q6BKT4"/>
<dbReference type="MEROPS" id="T05.001"/>
<dbReference type="GeneID" id="2903310"/>
<dbReference type="KEGG" id="dha:DEHA2F19382g"/>
<dbReference type="eggNOG" id="KOG2786">
    <property type="taxonomic scope" value="Eukaryota"/>
</dbReference>
<dbReference type="HOGENOM" id="CLU_027172_1_0_1"/>
<dbReference type="InParanoid" id="Q6BKT4"/>
<dbReference type="OrthoDB" id="2017946at2759"/>
<dbReference type="UniPathway" id="UPA00068">
    <property type="reaction ID" value="UER00106"/>
</dbReference>
<dbReference type="UniPathway" id="UPA00068">
    <property type="reaction ID" value="UER00111"/>
</dbReference>
<dbReference type="Proteomes" id="UP000000599">
    <property type="component" value="Chromosome F"/>
</dbReference>
<dbReference type="GO" id="GO:0005759">
    <property type="term" value="C:mitochondrial matrix"/>
    <property type="evidence" value="ECO:0007669"/>
    <property type="project" value="UniProtKB-SubCell"/>
</dbReference>
<dbReference type="GO" id="GO:0004358">
    <property type="term" value="F:glutamate N-acetyltransferase activity"/>
    <property type="evidence" value="ECO:0007669"/>
    <property type="project" value="UniProtKB-UniRule"/>
</dbReference>
<dbReference type="GO" id="GO:0004042">
    <property type="term" value="F:L-glutamate N-acetyltransferase activity"/>
    <property type="evidence" value="ECO:0007669"/>
    <property type="project" value="UniProtKB-UniRule"/>
</dbReference>
<dbReference type="GO" id="GO:0006526">
    <property type="term" value="P:L-arginine biosynthetic process"/>
    <property type="evidence" value="ECO:0007669"/>
    <property type="project" value="UniProtKB-UniRule"/>
</dbReference>
<dbReference type="GO" id="GO:0006592">
    <property type="term" value="P:ornithine biosynthetic process"/>
    <property type="evidence" value="ECO:0007669"/>
    <property type="project" value="TreeGrafter"/>
</dbReference>
<dbReference type="CDD" id="cd02152">
    <property type="entry name" value="OAT"/>
    <property type="match status" value="1"/>
</dbReference>
<dbReference type="FunFam" id="3.10.20.340:FF:000002">
    <property type="entry name" value="Arginine biosynthesis bifunctional protein ArgJ, mitochondrial"/>
    <property type="match status" value="1"/>
</dbReference>
<dbReference type="FunFam" id="3.30.2330.10:FF:000001">
    <property type="entry name" value="Arginine biosynthesis bifunctional protein ArgJ, mitochondrial"/>
    <property type="match status" value="1"/>
</dbReference>
<dbReference type="FunFam" id="3.60.70.12:FF:000002">
    <property type="entry name" value="Arginine biosynthesis bifunctional protein ArgJ, mitochondrial"/>
    <property type="match status" value="1"/>
</dbReference>
<dbReference type="Gene3D" id="3.30.2330.10">
    <property type="entry name" value="arginine biosynthesis bifunctional protein suprefamily"/>
    <property type="match status" value="1"/>
</dbReference>
<dbReference type="Gene3D" id="3.10.20.340">
    <property type="entry name" value="ArgJ beta chain, C-terminal domain"/>
    <property type="match status" value="1"/>
</dbReference>
<dbReference type="Gene3D" id="3.60.70.12">
    <property type="entry name" value="L-amino peptidase D-ALA esterase/amidase"/>
    <property type="match status" value="1"/>
</dbReference>
<dbReference type="HAMAP" id="MF_01106">
    <property type="entry name" value="ArgJ"/>
    <property type="match status" value="1"/>
</dbReference>
<dbReference type="InterPro" id="IPR002813">
    <property type="entry name" value="Arg_biosynth_ArgJ"/>
</dbReference>
<dbReference type="InterPro" id="IPR016117">
    <property type="entry name" value="ArgJ-like_dom_sf"/>
</dbReference>
<dbReference type="InterPro" id="IPR042195">
    <property type="entry name" value="ArgJ_beta_C"/>
</dbReference>
<dbReference type="NCBIfam" id="TIGR00120">
    <property type="entry name" value="ArgJ"/>
    <property type="match status" value="1"/>
</dbReference>
<dbReference type="NCBIfam" id="NF003802">
    <property type="entry name" value="PRK05388.1"/>
    <property type="match status" value="1"/>
</dbReference>
<dbReference type="PANTHER" id="PTHR23100">
    <property type="entry name" value="ARGININE BIOSYNTHESIS BIFUNCTIONAL PROTEIN ARGJ"/>
    <property type="match status" value="1"/>
</dbReference>
<dbReference type="PANTHER" id="PTHR23100:SF0">
    <property type="entry name" value="ARGININE BIOSYNTHESIS BIFUNCTIONAL PROTEIN ARGJ, MITOCHONDRIAL"/>
    <property type="match status" value="1"/>
</dbReference>
<dbReference type="Pfam" id="PF01960">
    <property type="entry name" value="ArgJ"/>
    <property type="match status" value="1"/>
</dbReference>
<dbReference type="SUPFAM" id="SSF56266">
    <property type="entry name" value="DmpA/ArgJ-like"/>
    <property type="match status" value="1"/>
</dbReference>
<gene>
    <name type="ordered locus">DEHA2F19382g</name>
</gene>
<keyword id="KW-0012">Acyltransferase</keyword>
<keyword id="KW-0028">Amino-acid biosynthesis</keyword>
<keyword id="KW-0055">Arginine biosynthesis</keyword>
<keyword id="KW-0068">Autocatalytic cleavage</keyword>
<keyword id="KW-0496">Mitochondrion</keyword>
<keyword id="KW-0511">Multifunctional enzyme</keyword>
<keyword id="KW-1185">Reference proteome</keyword>
<keyword id="KW-0808">Transferase</keyword>